<sequence>MLNLLILILFIVFSSPIVAAEIFVSNTEKNCPEWSQDKLQRETNSLMQQMAHWDQLYRQKGISEIDDEVYDQLMSELTHWQFCLKQAPHSDFPVEVFPDNKLVHPVAHTGLSKLKDKQEINRWLHGRLPVWLQPKIDGVAVTLVYQNGKLVSLISRGNGAEGVNWTAKSRYIPDIPQNIENAPPDLVLQGELFLHKEEHRQQLLGSDGARNRVAGLMMRKDHSSELKQIGLFIWSWPDGPAEMESKLRKLADMGFPLALRYSHKIEEPEQVQKLRMHYFEQPMLFATDGIVLKQEIEPKGNQWRSGSNSWAVAWKHPLRHQVTQVREVNFTIGRTGKISVVLGLDKVKLDDRQISRVNIGSVRRWRQLDVLPGDRVTLTLAGHGIPKLAQVVWRIKERQDIQPPDKQHYHALSCLTLTVGCEQQFNARLKWLGENLQMTGVSSGSWAMLTERKLVTDLTGWLALSAQQIAALPGIGDKRAQAIYSQFSKAKNQPFSYWMKGIGVPYMDKLSDNVYHWQQLEQKLAAAQLKQQLTVGQLKKLSDFVSDAQIKAIAEKLSVAGITGFDRENGVVVNPADMAQ</sequence>
<name>LIGB_PHOLL</name>
<accession>Q7N9N4</accession>
<organism>
    <name type="scientific">Photorhabdus laumondii subsp. laumondii (strain DSM 15139 / CIP 105565 / TT01)</name>
    <name type="common">Photorhabdus luminescens subsp. laumondii</name>
    <dbReference type="NCBI Taxonomy" id="243265"/>
    <lineage>
        <taxon>Bacteria</taxon>
        <taxon>Pseudomonadati</taxon>
        <taxon>Pseudomonadota</taxon>
        <taxon>Gammaproteobacteria</taxon>
        <taxon>Enterobacterales</taxon>
        <taxon>Morganellaceae</taxon>
        <taxon>Photorhabdus</taxon>
    </lineage>
</organism>
<evidence type="ECO:0000255" key="1">
    <source>
        <dbReference type="HAMAP-Rule" id="MF_01587"/>
    </source>
</evidence>
<dbReference type="EC" id="6.5.1.2" evidence="1"/>
<dbReference type="EMBL" id="BX571859">
    <property type="protein sequence ID" value="CAE12581.1"/>
    <property type="molecule type" value="Genomic_DNA"/>
</dbReference>
<dbReference type="SMR" id="Q7N9N4"/>
<dbReference type="STRING" id="243265.plu0286"/>
<dbReference type="KEGG" id="plu:plu0286"/>
<dbReference type="eggNOG" id="COG0272">
    <property type="taxonomic scope" value="Bacteria"/>
</dbReference>
<dbReference type="HOGENOM" id="CLU_489786_0_0_6"/>
<dbReference type="OrthoDB" id="9759736at2"/>
<dbReference type="Proteomes" id="UP000002514">
    <property type="component" value="Chromosome"/>
</dbReference>
<dbReference type="GO" id="GO:0003911">
    <property type="term" value="F:DNA ligase (NAD+) activity"/>
    <property type="evidence" value="ECO:0007669"/>
    <property type="project" value="UniProtKB-UniRule"/>
</dbReference>
<dbReference type="GO" id="GO:0006281">
    <property type="term" value="P:DNA repair"/>
    <property type="evidence" value="ECO:0007669"/>
    <property type="project" value="UniProtKB-KW"/>
</dbReference>
<dbReference type="GO" id="GO:0006260">
    <property type="term" value="P:DNA replication"/>
    <property type="evidence" value="ECO:0007669"/>
    <property type="project" value="UniProtKB-KW"/>
</dbReference>
<dbReference type="Gene3D" id="3.30.470.30">
    <property type="entry name" value="DNA ligase/mRNA capping enzyme"/>
    <property type="match status" value="1"/>
</dbReference>
<dbReference type="Gene3D" id="1.10.287.610">
    <property type="entry name" value="Helix hairpin bin"/>
    <property type="match status" value="1"/>
</dbReference>
<dbReference type="Gene3D" id="2.40.50.140">
    <property type="entry name" value="Nucleic acid-binding proteins"/>
    <property type="match status" value="1"/>
</dbReference>
<dbReference type="HAMAP" id="MF_01587">
    <property type="entry name" value="DNA_ligase_B"/>
    <property type="match status" value="1"/>
</dbReference>
<dbReference type="InterPro" id="IPR020923">
    <property type="entry name" value="DNA_ligase_B"/>
</dbReference>
<dbReference type="InterPro" id="IPR013839">
    <property type="entry name" value="DNAligase_adenylation"/>
</dbReference>
<dbReference type="InterPro" id="IPR013840">
    <property type="entry name" value="DNAligase_N"/>
</dbReference>
<dbReference type="InterPro" id="IPR012340">
    <property type="entry name" value="NA-bd_OB-fold"/>
</dbReference>
<dbReference type="InterPro" id="IPR050326">
    <property type="entry name" value="NAD_dep_DNA_ligaseB"/>
</dbReference>
<dbReference type="InterPro" id="IPR004150">
    <property type="entry name" value="NAD_DNA_ligase_OB"/>
</dbReference>
<dbReference type="InterPro" id="IPR010994">
    <property type="entry name" value="RuvA_2-like"/>
</dbReference>
<dbReference type="NCBIfam" id="NF005987">
    <property type="entry name" value="PRK08097.1"/>
    <property type="match status" value="1"/>
</dbReference>
<dbReference type="PANTHER" id="PTHR47810">
    <property type="entry name" value="DNA LIGASE"/>
    <property type="match status" value="1"/>
</dbReference>
<dbReference type="PANTHER" id="PTHR47810:SF1">
    <property type="entry name" value="DNA LIGASE B"/>
    <property type="match status" value="1"/>
</dbReference>
<dbReference type="Pfam" id="PF01653">
    <property type="entry name" value="DNA_ligase_aden"/>
    <property type="match status" value="1"/>
</dbReference>
<dbReference type="Pfam" id="PF03120">
    <property type="entry name" value="DNA_ligase_OB"/>
    <property type="match status" value="1"/>
</dbReference>
<dbReference type="SMART" id="SM00532">
    <property type="entry name" value="LIGANc"/>
    <property type="match status" value="1"/>
</dbReference>
<dbReference type="SUPFAM" id="SSF56091">
    <property type="entry name" value="DNA ligase/mRNA capping enzyme, catalytic domain"/>
    <property type="match status" value="1"/>
</dbReference>
<dbReference type="SUPFAM" id="SSF50249">
    <property type="entry name" value="Nucleic acid-binding proteins"/>
    <property type="match status" value="1"/>
</dbReference>
<dbReference type="SUPFAM" id="SSF47781">
    <property type="entry name" value="RuvA domain 2-like"/>
    <property type="match status" value="1"/>
</dbReference>
<comment type="function">
    <text evidence="1">Catalyzes the formation of phosphodiester linkages between 5'-phosphoryl and 3'-hydroxyl groups in double-stranded DNA using NAD as a coenzyme and as the energy source for the reaction.</text>
</comment>
<comment type="catalytic activity">
    <reaction evidence="1">
        <text>NAD(+) + (deoxyribonucleotide)n-3'-hydroxyl + 5'-phospho-(deoxyribonucleotide)m = (deoxyribonucleotide)n+m + AMP + beta-nicotinamide D-nucleotide.</text>
        <dbReference type="EC" id="6.5.1.2"/>
    </reaction>
</comment>
<comment type="similarity">
    <text evidence="1">Belongs to the NAD-dependent DNA ligase family. LigB subfamily.</text>
</comment>
<protein>
    <recommendedName>
        <fullName evidence="1">DNA ligase B</fullName>
        <ecNumber evidence="1">6.5.1.2</ecNumber>
    </recommendedName>
    <alternativeName>
        <fullName evidence="1">Polydeoxyribonucleotide synthase [NAD(+)] B</fullName>
    </alternativeName>
</protein>
<reference key="1">
    <citation type="journal article" date="2003" name="Nat. Biotechnol.">
        <title>The genome sequence of the entomopathogenic bacterium Photorhabdus luminescens.</title>
        <authorList>
            <person name="Duchaud E."/>
            <person name="Rusniok C."/>
            <person name="Frangeul L."/>
            <person name="Buchrieser C."/>
            <person name="Givaudan A."/>
            <person name="Taourit S."/>
            <person name="Bocs S."/>
            <person name="Boursaux-Eude C."/>
            <person name="Chandler M."/>
            <person name="Charles J.-F."/>
            <person name="Dassa E."/>
            <person name="Derose R."/>
            <person name="Derzelle S."/>
            <person name="Freyssinet G."/>
            <person name="Gaudriault S."/>
            <person name="Medigue C."/>
            <person name="Lanois A."/>
            <person name="Powell K."/>
            <person name="Siguier P."/>
            <person name="Vincent R."/>
            <person name="Wingate V."/>
            <person name="Zouine M."/>
            <person name="Glaser P."/>
            <person name="Boemare N."/>
            <person name="Danchin A."/>
            <person name="Kunst F."/>
        </authorList>
    </citation>
    <scope>NUCLEOTIDE SEQUENCE [LARGE SCALE GENOMIC DNA]</scope>
    <source>
        <strain>DSM 15139 / CIP 105565 / TT01</strain>
    </source>
</reference>
<feature type="chain" id="PRO_0000313543" description="DNA ligase B">
    <location>
        <begin position="1"/>
        <end position="580"/>
    </location>
</feature>
<feature type="active site" description="N6-AMP-lysine intermediate" evidence="1">
    <location>
        <position position="135"/>
    </location>
</feature>
<keyword id="KW-0227">DNA damage</keyword>
<keyword id="KW-0234">DNA repair</keyword>
<keyword id="KW-0235">DNA replication</keyword>
<keyword id="KW-0436">Ligase</keyword>
<keyword id="KW-0520">NAD</keyword>
<keyword id="KW-1185">Reference proteome</keyword>
<proteinExistence type="inferred from homology"/>
<gene>
    <name evidence="1" type="primary">ligB</name>
    <name type="ordered locus">plu0286</name>
</gene>